<accession>Q6G3F5</accession>
<sequence length="211" mass="23162">MNEGEILFQFTTWLIFLISYLIGSIPFGLLLTKLAKLGDVRTIGSGNIGATNVLRTGNKKVAALTLLCDILKGTLVILVIKFLTDPIENNIFISLAGFFAFLGHLFPVWLKFKGGKGVATYLGVCLGLYWPAAIVFITAWIVLFLITRYSSLSALIAVIITPIFVHFSYPYLYAHCILVIMSLLVMIKHHANIGRLLVGKESKIGTQNGGK</sequence>
<evidence type="ECO:0000255" key="1">
    <source>
        <dbReference type="HAMAP-Rule" id="MF_01043"/>
    </source>
</evidence>
<name>PLSY_BARHE</name>
<organism>
    <name type="scientific">Bartonella henselae (strain ATCC 49882 / DSM 28221 / CCUG 30454 / Houston 1)</name>
    <name type="common">Rochalimaea henselae</name>
    <dbReference type="NCBI Taxonomy" id="283166"/>
    <lineage>
        <taxon>Bacteria</taxon>
        <taxon>Pseudomonadati</taxon>
        <taxon>Pseudomonadota</taxon>
        <taxon>Alphaproteobacteria</taxon>
        <taxon>Hyphomicrobiales</taxon>
        <taxon>Bartonellaceae</taxon>
        <taxon>Bartonella</taxon>
    </lineage>
</organism>
<dbReference type="EC" id="2.3.1.275" evidence="1"/>
<dbReference type="EMBL" id="BX897699">
    <property type="protein sequence ID" value="CAF27617.1"/>
    <property type="molecule type" value="Genomic_DNA"/>
</dbReference>
<dbReference type="RefSeq" id="WP_011180713.1">
    <property type="nucleotide sequence ID" value="NZ_LRIJ02000001.1"/>
</dbReference>
<dbReference type="SMR" id="Q6G3F5"/>
<dbReference type="PaxDb" id="283166-BH08180"/>
<dbReference type="EnsemblBacteria" id="CAF27617">
    <property type="protein sequence ID" value="CAF27617"/>
    <property type="gene ID" value="BH08180"/>
</dbReference>
<dbReference type="GeneID" id="92985518"/>
<dbReference type="KEGG" id="bhe:BH08180"/>
<dbReference type="eggNOG" id="COG0344">
    <property type="taxonomic scope" value="Bacteria"/>
</dbReference>
<dbReference type="OrthoDB" id="9777124at2"/>
<dbReference type="UniPathway" id="UPA00085"/>
<dbReference type="Proteomes" id="UP000000421">
    <property type="component" value="Chromosome"/>
</dbReference>
<dbReference type="GO" id="GO:0005886">
    <property type="term" value="C:plasma membrane"/>
    <property type="evidence" value="ECO:0007669"/>
    <property type="project" value="UniProtKB-SubCell"/>
</dbReference>
<dbReference type="GO" id="GO:0043772">
    <property type="term" value="F:acyl-phosphate glycerol-3-phosphate acyltransferase activity"/>
    <property type="evidence" value="ECO:0007669"/>
    <property type="project" value="UniProtKB-UniRule"/>
</dbReference>
<dbReference type="GO" id="GO:0008654">
    <property type="term" value="P:phospholipid biosynthetic process"/>
    <property type="evidence" value="ECO:0007669"/>
    <property type="project" value="UniProtKB-UniRule"/>
</dbReference>
<dbReference type="HAMAP" id="MF_01043">
    <property type="entry name" value="PlsY"/>
    <property type="match status" value="1"/>
</dbReference>
<dbReference type="InterPro" id="IPR003811">
    <property type="entry name" value="G3P_acylTferase_PlsY"/>
</dbReference>
<dbReference type="NCBIfam" id="TIGR00023">
    <property type="entry name" value="glycerol-3-phosphate 1-O-acyltransferase PlsY"/>
    <property type="match status" value="1"/>
</dbReference>
<dbReference type="PANTHER" id="PTHR30309:SF0">
    <property type="entry name" value="GLYCEROL-3-PHOSPHATE ACYLTRANSFERASE-RELATED"/>
    <property type="match status" value="1"/>
</dbReference>
<dbReference type="PANTHER" id="PTHR30309">
    <property type="entry name" value="INNER MEMBRANE PROTEIN YGIH"/>
    <property type="match status" value="1"/>
</dbReference>
<dbReference type="Pfam" id="PF02660">
    <property type="entry name" value="G3P_acyltransf"/>
    <property type="match status" value="1"/>
</dbReference>
<dbReference type="SMART" id="SM01207">
    <property type="entry name" value="G3P_acyltransf"/>
    <property type="match status" value="1"/>
</dbReference>
<keyword id="KW-0997">Cell inner membrane</keyword>
<keyword id="KW-1003">Cell membrane</keyword>
<keyword id="KW-0444">Lipid biosynthesis</keyword>
<keyword id="KW-0443">Lipid metabolism</keyword>
<keyword id="KW-0472">Membrane</keyword>
<keyword id="KW-0594">Phospholipid biosynthesis</keyword>
<keyword id="KW-1208">Phospholipid metabolism</keyword>
<keyword id="KW-0808">Transferase</keyword>
<keyword id="KW-0812">Transmembrane</keyword>
<keyword id="KW-1133">Transmembrane helix</keyword>
<feature type="chain" id="PRO_0000188329" description="Glycerol-3-phosphate acyltransferase">
    <location>
        <begin position="1"/>
        <end position="211"/>
    </location>
</feature>
<feature type="transmembrane region" description="Helical" evidence="1">
    <location>
        <begin position="10"/>
        <end position="30"/>
    </location>
</feature>
<feature type="transmembrane region" description="Helical" evidence="1">
    <location>
        <begin position="63"/>
        <end position="83"/>
    </location>
</feature>
<feature type="transmembrane region" description="Helical" evidence="1">
    <location>
        <begin position="90"/>
        <end position="110"/>
    </location>
</feature>
<feature type="transmembrane region" description="Helical" evidence="1">
    <location>
        <begin position="126"/>
        <end position="146"/>
    </location>
</feature>
<feature type="transmembrane region" description="Helical" evidence="1">
    <location>
        <begin position="152"/>
        <end position="172"/>
    </location>
</feature>
<comment type="function">
    <text evidence="1">Catalyzes the transfer of an acyl group from acyl-phosphate (acyl-PO(4)) to glycerol-3-phosphate (G3P) to form lysophosphatidic acid (LPA). This enzyme utilizes acyl-phosphate as fatty acyl donor, but not acyl-CoA or acyl-ACP.</text>
</comment>
<comment type="catalytic activity">
    <reaction evidence="1">
        <text>an acyl phosphate + sn-glycerol 3-phosphate = a 1-acyl-sn-glycero-3-phosphate + phosphate</text>
        <dbReference type="Rhea" id="RHEA:34075"/>
        <dbReference type="ChEBI" id="CHEBI:43474"/>
        <dbReference type="ChEBI" id="CHEBI:57597"/>
        <dbReference type="ChEBI" id="CHEBI:57970"/>
        <dbReference type="ChEBI" id="CHEBI:59918"/>
        <dbReference type="EC" id="2.3.1.275"/>
    </reaction>
</comment>
<comment type="pathway">
    <text evidence="1">Lipid metabolism; phospholipid metabolism.</text>
</comment>
<comment type="subunit">
    <text evidence="1">Probably interacts with PlsX.</text>
</comment>
<comment type="subcellular location">
    <subcellularLocation>
        <location evidence="1">Cell inner membrane</location>
        <topology evidence="1">Multi-pass membrane protein</topology>
    </subcellularLocation>
</comment>
<comment type="similarity">
    <text evidence="1">Belongs to the PlsY family.</text>
</comment>
<proteinExistence type="inferred from homology"/>
<reference key="1">
    <citation type="journal article" date="2004" name="Proc. Natl. Acad. Sci. U.S.A.">
        <title>The louse-borne human pathogen Bartonella quintana is a genomic derivative of the zoonotic agent Bartonella henselae.</title>
        <authorList>
            <person name="Alsmark U.C.M."/>
            <person name="Frank A.C."/>
            <person name="Karlberg E.O."/>
            <person name="Legault B.-A."/>
            <person name="Ardell D.H."/>
            <person name="Canbaeck B."/>
            <person name="Eriksson A.-S."/>
            <person name="Naeslund A.K."/>
            <person name="Handley S.A."/>
            <person name="Huvet M."/>
            <person name="La Scola B."/>
            <person name="Holmberg M."/>
            <person name="Andersson S.G.E."/>
        </authorList>
    </citation>
    <scope>NUCLEOTIDE SEQUENCE [LARGE SCALE GENOMIC DNA]</scope>
    <source>
        <strain>ATCC 49882 / DSM 28221 / CCUG 30454 / Houston 1</strain>
    </source>
</reference>
<gene>
    <name evidence="1" type="primary">plsY</name>
    <name type="ordered locus">BH08180</name>
</gene>
<protein>
    <recommendedName>
        <fullName evidence="1">Glycerol-3-phosphate acyltransferase</fullName>
    </recommendedName>
    <alternativeName>
        <fullName evidence="1">Acyl-PO4 G3P acyltransferase</fullName>
    </alternativeName>
    <alternativeName>
        <fullName evidence="1">Acyl-phosphate--glycerol-3-phosphate acyltransferase</fullName>
    </alternativeName>
    <alternativeName>
        <fullName evidence="1">G3P acyltransferase</fullName>
        <shortName evidence="1">GPAT</shortName>
        <ecNumber evidence="1">2.3.1.275</ecNumber>
    </alternativeName>
    <alternativeName>
        <fullName evidence="1">Lysophosphatidic acid synthase</fullName>
        <shortName evidence="1">LPA synthase</shortName>
    </alternativeName>
</protein>